<comment type="catalytic activity">
    <reaction evidence="1">
        <text>orotidine 5'-phosphate + H(+) = UMP + CO2</text>
        <dbReference type="Rhea" id="RHEA:11596"/>
        <dbReference type="ChEBI" id="CHEBI:15378"/>
        <dbReference type="ChEBI" id="CHEBI:16526"/>
        <dbReference type="ChEBI" id="CHEBI:57538"/>
        <dbReference type="ChEBI" id="CHEBI:57865"/>
        <dbReference type="EC" id="4.1.1.23"/>
    </reaction>
</comment>
<comment type="pathway">
    <text evidence="1">Pyrimidine metabolism; UMP biosynthesis via de novo pathway; UMP from orotate: step 2/2.</text>
</comment>
<comment type="similarity">
    <text evidence="1">Belongs to the OMP decarboxylase family. Type 2 subfamily.</text>
</comment>
<gene>
    <name evidence="1" type="primary">pyrF</name>
    <name type="ordered locus">CJA_3170</name>
</gene>
<reference key="1">
    <citation type="journal article" date="2008" name="J. Bacteriol.">
        <title>Insights into plant cell wall degradation from the genome sequence of the soil bacterium Cellvibrio japonicus.</title>
        <authorList>
            <person name="DeBoy R.T."/>
            <person name="Mongodin E.F."/>
            <person name="Fouts D.E."/>
            <person name="Tailford L.E."/>
            <person name="Khouri H."/>
            <person name="Emerson J.B."/>
            <person name="Mohamoud Y."/>
            <person name="Watkins K."/>
            <person name="Henrissat B."/>
            <person name="Gilbert H.J."/>
            <person name="Nelson K.E."/>
        </authorList>
    </citation>
    <scope>NUCLEOTIDE SEQUENCE [LARGE SCALE GENOMIC DNA]</scope>
    <source>
        <strain>Ueda107</strain>
    </source>
</reference>
<dbReference type="EC" id="4.1.1.23" evidence="1"/>
<dbReference type="EMBL" id="CP000934">
    <property type="protein sequence ID" value="ACE83335.1"/>
    <property type="molecule type" value="Genomic_DNA"/>
</dbReference>
<dbReference type="RefSeq" id="WP_012488747.1">
    <property type="nucleotide sequence ID" value="NC_010995.1"/>
</dbReference>
<dbReference type="SMR" id="B3PDW7"/>
<dbReference type="STRING" id="498211.CJA_3170"/>
<dbReference type="KEGG" id="cja:CJA_3170"/>
<dbReference type="eggNOG" id="COG0284">
    <property type="taxonomic scope" value="Bacteria"/>
</dbReference>
<dbReference type="HOGENOM" id="CLU_060704_1_0_6"/>
<dbReference type="OrthoDB" id="9808470at2"/>
<dbReference type="UniPathway" id="UPA00070">
    <property type="reaction ID" value="UER00120"/>
</dbReference>
<dbReference type="Proteomes" id="UP000001036">
    <property type="component" value="Chromosome"/>
</dbReference>
<dbReference type="GO" id="GO:0004590">
    <property type="term" value="F:orotidine-5'-phosphate decarboxylase activity"/>
    <property type="evidence" value="ECO:0007669"/>
    <property type="project" value="UniProtKB-UniRule"/>
</dbReference>
<dbReference type="GO" id="GO:0006207">
    <property type="term" value="P:'de novo' pyrimidine nucleobase biosynthetic process"/>
    <property type="evidence" value="ECO:0007669"/>
    <property type="project" value="InterPro"/>
</dbReference>
<dbReference type="GO" id="GO:0044205">
    <property type="term" value="P:'de novo' UMP biosynthetic process"/>
    <property type="evidence" value="ECO:0007669"/>
    <property type="project" value="UniProtKB-UniRule"/>
</dbReference>
<dbReference type="CDD" id="cd04725">
    <property type="entry name" value="OMP_decarboxylase_like"/>
    <property type="match status" value="1"/>
</dbReference>
<dbReference type="Gene3D" id="3.20.20.70">
    <property type="entry name" value="Aldolase class I"/>
    <property type="match status" value="1"/>
</dbReference>
<dbReference type="HAMAP" id="MF_01215">
    <property type="entry name" value="OMPdecase_type2"/>
    <property type="match status" value="1"/>
</dbReference>
<dbReference type="InterPro" id="IPR013785">
    <property type="entry name" value="Aldolase_TIM"/>
</dbReference>
<dbReference type="InterPro" id="IPR018089">
    <property type="entry name" value="OMPdecase_AS"/>
</dbReference>
<dbReference type="InterPro" id="IPR011995">
    <property type="entry name" value="OMPdecase_type-2"/>
</dbReference>
<dbReference type="InterPro" id="IPR001754">
    <property type="entry name" value="OMPdeCOase_dom"/>
</dbReference>
<dbReference type="InterPro" id="IPR011060">
    <property type="entry name" value="RibuloseP-bd_barrel"/>
</dbReference>
<dbReference type="NCBIfam" id="TIGR02127">
    <property type="entry name" value="pyrF_sub2"/>
    <property type="match status" value="1"/>
</dbReference>
<dbReference type="PANTHER" id="PTHR43375">
    <property type="entry name" value="OROTIDINE 5'-PHOSPHATE DECARBOXYLASE"/>
    <property type="match status" value="1"/>
</dbReference>
<dbReference type="PANTHER" id="PTHR43375:SF1">
    <property type="entry name" value="OROTIDINE 5'-PHOSPHATE DECARBOXYLASE"/>
    <property type="match status" value="1"/>
</dbReference>
<dbReference type="Pfam" id="PF00215">
    <property type="entry name" value="OMPdecase"/>
    <property type="match status" value="1"/>
</dbReference>
<dbReference type="SMART" id="SM00934">
    <property type="entry name" value="OMPdecase"/>
    <property type="match status" value="1"/>
</dbReference>
<dbReference type="SUPFAM" id="SSF51366">
    <property type="entry name" value="Ribulose-phoshate binding barrel"/>
    <property type="match status" value="1"/>
</dbReference>
<dbReference type="PROSITE" id="PS00156">
    <property type="entry name" value="OMPDECASE"/>
    <property type="match status" value="1"/>
</dbReference>
<sequence length="273" mass="29506">MSFIEKLKNAWVSNNSLLCIGLDPDTEKFPDLFKTMAKPEAVFAFNKAIIDATHDLVCAYKPQIAYFSAEAAETSLEQTIAYIKTQYPHIPVILDAKRGDIGSTAQKYAAEAFERYQADAVTVNPYLGLDSITPFTAYRERGTILLCRTSNSGAADLQDLSVDGIPLYQKVAITARDHWNSHNNCLLVVGATWPEQMAAIRQLVGDMPFLVPGVGAQGGDVNAMVKAGKTADGNGLIISSSRAVLYASNGDDFAQAARAVALSLRQQINVARA</sequence>
<keyword id="KW-0210">Decarboxylase</keyword>
<keyword id="KW-0456">Lyase</keyword>
<keyword id="KW-0665">Pyrimidine biosynthesis</keyword>
<keyword id="KW-1185">Reference proteome</keyword>
<protein>
    <recommendedName>
        <fullName evidence="1">Orotidine 5'-phosphate decarboxylase</fullName>
        <ecNumber evidence="1">4.1.1.23</ecNumber>
    </recommendedName>
    <alternativeName>
        <fullName evidence="1">OMP decarboxylase</fullName>
        <shortName evidence="1">OMPDCase</shortName>
        <shortName evidence="1">OMPdecase</shortName>
    </alternativeName>
</protein>
<organism>
    <name type="scientific">Cellvibrio japonicus (strain Ueda107)</name>
    <name type="common">Pseudomonas fluorescens subsp. cellulosa</name>
    <dbReference type="NCBI Taxonomy" id="498211"/>
    <lineage>
        <taxon>Bacteria</taxon>
        <taxon>Pseudomonadati</taxon>
        <taxon>Pseudomonadota</taxon>
        <taxon>Gammaproteobacteria</taxon>
        <taxon>Cellvibrionales</taxon>
        <taxon>Cellvibrionaceae</taxon>
        <taxon>Cellvibrio</taxon>
    </lineage>
</organism>
<evidence type="ECO:0000255" key="1">
    <source>
        <dbReference type="HAMAP-Rule" id="MF_01215"/>
    </source>
</evidence>
<accession>B3PDW7</accession>
<proteinExistence type="inferred from homology"/>
<name>PYRF_CELJU</name>
<feature type="chain" id="PRO_1000138948" description="Orotidine 5'-phosphate decarboxylase">
    <location>
        <begin position="1"/>
        <end position="273"/>
    </location>
</feature>
<feature type="active site" description="Proton donor" evidence="1">
    <location>
        <position position="97"/>
    </location>
</feature>